<comment type="subcellular location">
    <subcellularLocation>
        <location evidence="3">Cell membrane</location>
        <topology evidence="3">Multi-pass membrane protein</topology>
    </subcellularLocation>
</comment>
<comment type="similarity">
    <text evidence="3">Belongs to the ABC-4 integral membrane protein family.</text>
</comment>
<gene>
    <name type="ordered locus">Rv2563</name>
    <name type="ORF">MTCY9C4.05c</name>
</gene>
<sequence>MLFAALRDVQWRKRRLVIAIVSTGLVFAMTLVLTGLVNGFRVEAERTVDSMGVDAFVVKAGAAGPFLGSTPFAQIDLPQVARAPGVLAAAPLATAPSTIRQGTSARNVTAFGAPEHGPGMPRVSDGRAPSTPDEVAVSSTLGRNLGDDLQVGARTLRIVGIVPESTALAKIPNIFLTTEGLQQLAYNGQPTISSIGIDGMPRQLPDGYQTVNRADAVSDLMRPLKVAVDAITVVAVLLWIVAALIVGSVVYLSALERLRDFAVFKAIGVPTRSILAGLALQAVVVALLAAVVGGILSLLLAPLFPMTVVVPLSAFVALPAIATVIGLLASVAGLRRVVAIDPALAFGGP</sequence>
<organism>
    <name type="scientific">Mycobacterium tuberculosis (strain ATCC 25618 / H37Rv)</name>
    <dbReference type="NCBI Taxonomy" id="83332"/>
    <lineage>
        <taxon>Bacteria</taxon>
        <taxon>Bacillati</taxon>
        <taxon>Actinomycetota</taxon>
        <taxon>Actinomycetes</taxon>
        <taxon>Mycobacteriales</taxon>
        <taxon>Mycobacteriaceae</taxon>
        <taxon>Mycobacterium</taxon>
        <taxon>Mycobacterium tuberculosis complex</taxon>
    </lineage>
</organism>
<dbReference type="EMBL" id="AL123456">
    <property type="protein sequence ID" value="CCP45359.1"/>
    <property type="molecule type" value="Genomic_DNA"/>
</dbReference>
<dbReference type="PIR" id="G70728">
    <property type="entry name" value="G70728"/>
</dbReference>
<dbReference type="RefSeq" id="NP_217079.1">
    <property type="nucleotide sequence ID" value="NC_000962.3"/>
</dbReference>
<dbReference type="RefSeq" id="WP_003413230.1">
    <property type="nucleotide sequence ID" value="NZ_NVQJ01000023.1"/>
</dbReference>
<dbReference type="SMR" id="P9WG15"/>
<dbReference type="FunCoup" id="P9WG15">
    <property type="interactions" value="1"/>
</dbReference>
<dbReference type="STRING" id="83332.Rv2563"/>
<dbReference type="PaxDb" id="83332-Rv2563"/>
<dbReference type="GeneID" id="887516"/>
<dbReference type="KEGG" id="mtu:Rv2563"/>
<dbReference type="KEGG" id="mtv:RVBD_2563"/>
<dbReference type="TubercuList" id="Rv2563"/>
<dbReference type="eggNOG" id="COG0577">
    <property type="taxonomic scope" value="Bacteria"/>
</dbReference>
<dbReference type="InParanoid" id="P9WG15"/>
<dbReference type="OrthoDB" id="7298150at2"/>
<dbReference type="PhylomeDB" id="P9WG15"/>
<dbReference type="Proteomes" id="UP000001584">
    <property type="component" value="Chromosome"/>
</dbReference>
<dbReference type="GO" id="GO:0005576">
    <property type="term" value="C:extracellular region"/>
    <property type="evidence" value="ECO:0007005"/>
    <property type="project" value="MTBBASE"/>
</dbReference>
<dbReference type="GO" id="GO:0005886">
    <property type="term" value="C:plasma membrane"/>
    <property type="evidence" value="ECO:0007005"/>
    <property type="project" value="MTBBASE"/>
</dbReference>
<dbReference type="InterPro" id="IPR051125">
    <property type="entry name" value="ABC-4/HrtB_transporter"/>
</dbReference>
<dbReference type="InterPro" id="IPR003838">
    <property type="entry name" value="ABC3_permease_C"/>
</dbReference>
<dbReference type="InterPro" id="IPR025857">
    <property type="entry name" value="MacB_PCD"/>
</dbReference>
<dbReference type="PANTHER" id="PTHR43738">
    <property type="entry name" value="ABC TRANSPORTER, MEMBRANE PROTEIN"/>
    <property type="match status" value="1"/>
</dbReference>
<dbReference type="PANTHER" id="PTHR43738:SF1">
    <property type="entry name" value="HEMIN TRANSPORT SYSTEM PERMEASE PROTEIN HRTB-RELATED"/>
    <property type="match status" value="1"/>
</dbReference>
<dbReference type="Pfam" id="PF02687">
    <property type="entry name" value="FtsX"/>
    <property type="match status" value="1"/>
</dbReference>
<dbReference type="Pfam" id="PF12704">
    <property type="entry name" value="MacB_PCD"/>
    <property type="match status" value="1"/>
</dbReference>
<reference key="1">
    <citation type="journal article" date="1998" name="Nature">
        <title>Deciphering the biology of Mycobacterium tuberculosis from the complete genome sequence.</title>
        <authorList>
            <person name="Cole S.T."/>
            <person name="Brosch R."/>
            <person name="Parkhill J."/>
            <person name="Garnier T."/>
            <person name="Churcher C.M."/>
            <person name="Harris D.E."/>
            <person name="Gordon S.V."/>
            <person name="Eiglmeier K."/>
            <person name="Gas S."/>
            <person name="Barry C.E. III"/>
            <person name="Tekaia F."/>
            <person name="Badcock K."/>
            <person name="Basham D."/>
            <person name="Brown D."/>
            <person name="Chillingworth T."/>
            <person name="Connor R."/>
            <person name="Davies R.M."/>
            <person name="Devlin K."/>
            <person name="Feltwell T."/>
            <person name="Gentles S."/>
            <person name="Hamlin N."/>
            <person name="Holroyd S."/>
            <person name="Hornsby T."/>
            <person name="Jagels K."/>
            <person name="Krogh A."/>
            <person name="McLean J."/>
            <person name="Moule S."/>
            <person name="Murphy L.D."/>
            <person name="Oliver S."/>
            <person name="Osborne J."/>
            <person name="Quail M.A."/>
            <person name="Rajandream M.A."/>
            <person name="Rogers J."/>
            <person name="Rutter S."/>
            <person name="Seeger K."/>
            <person name="Skelton S."/>
            <person name="Squares S."/>
            <person name="Squares R."/>
            <person name="Sulston J.E."/>
            <person name="Taylor K."/>
            <person name="Whitehead S."/>
            <person name="Barrell B.G."/>
        </authorList>
    </citation>
    <scope>NUCLEOTIDE SEQUENCE [LARGE SCALE GENOMIC DNA]</scope>
    <source>
        <strain>ATCC 25618 / H37Rv</strain>
    </source>
</reference>
<reference key="2">
    <citation type="journal article" date="2011" name="Mol. Cell. Proteomics">
        <title>Proteogenomic analysis of Mycobacterium tuberculosis by high resolution mass spectrometry.</title>
        <authorList>
            <person name="Kelkar D.S."/>
            <person name="Kumar D."/>
            <person name="Kumar P."/>
            <person name="Balakrishnan L."/>
            <person name="Muthusamy B."/>
            <person name="Yadav A.K."/>
            <person name="Shrivastava P."/>
            <person name="Marimuthu A."/>
            <person name="Anand S."/>
            <person name="Sundaram H."/>
            <person name="Kingsbury R."/>
            <person name="Harsha H.C."/>
            <person name="Nair B."/>
            <person name="Prasad T.S."/>
            <person name="Chauhan D.S."/>
            <person name="Katoch K."/>
            <person name="Katoch V.M."/>
            <person name="Kumar P."/>
            <person name="Chaerkady R."/>
            <person name="Ramachandran S."/>
            <person name="Dash D."/>
            <person name="Pandey A."/>
        </authorList>
    </citation>
    <scope>IDENTIFICATION BY MASS SPECTROMETRY [LARGE SCALE ANALYSIS]</scope>
    <source>
        <strain>ATCC 25618 / H37Rv</strain>
    </source>
</reference>
<accession>P9WG15</accession>
<accession>L0TBL1</accession>
<accession>P65007</accession>
<accession>Q50735</accession>
<protein>
    <recommendedName>
        <fullName>Uncharacterized ABC transporter permease Rv2563</fullName>
    </recommendedName>
</protein>
<evidence type="ECO:0000255" key="1"/>
<evidence type="ECO:0000256" key="2">
    <source>
        <dbReference type="SAM" id="MobiDB-lite"/>
    </source>
</evidence>
<evidence type="ECO:0000305" key="3"/>
<name>Y2563_MYCTU</name>
<feature type="chain" id="PRO_0000014134" description="Uncharacterized ABC transporter permease Rv2563">
    <location>
        <begin position="1"/>
        <end position="349"/>
    </location>
</feature>
<feature type="transmembrane region" description="Helical" evidence="1">
    <location>
        <begin position="17"/>
        <end position="37"/>
    </location>
</feature>
<feature type="transmembrane region" description="Helical" evidence="1">
    <location>
        <begin position="230"/>
        <end position="250"/>
    </location>
</feature>
<feature type="transmembrane region" description="Helical" evidence="1">
    <location>
        <begin position="284"/>
        <end position="304"/>
    </location>
</feature>
<feature type="transmembrane region" description="Helical" evidence="1">
    <location>
        <begin position="308"/>
        <end position="328"/>
    </location>
</feature>
<feature type="region of interest" description="Disordered" evidence="2">
    <location>
        <begin position="111"/>
        <end position="131"/>
    </location>
</feature>
<proteinExistence type="evidence at protein level"/>
<keyword id="KW-1003">Cell membrane</keyword>
<keyword id="KW-0472">Membrane</keyword>
<keyword id="KW-1185">Reference proteome</keyword>
<keyword id="KW-0812">Transmembrane</keyword>
<keyword id="KW-1133">Transmembrane helix</keyword>
<keyword id="KW-0813">Transport</keyword>